<organism>
    <name type="scientific">Caenorhabditis elegans</name>
    <dbReference type="NCBI Taxonomy" id="6239"/>
    <lineage>
        <taxon>Eukaryota</taxon>
        <taxon>Metazoa</taxon>
        <taxon>Ecdysozoa</taxon>
        <taxon>Nematoda</taxon>
        <taxon>Chromadorea</taxon>
        <taxon>Rhabditida</taxon>
        <taxon>Rhabditina</taxon>
        <taxon>Rhabditomorpha</taxon>
        <taxon>Rhabditoidea</taxon>
        <taxon>Rhabditidae</taxon>
        <taxon>Peloderinae</taxon>
        <taxon>Caenorhabditis</taxon>
    </lineage>
</organism>
<gene>
    <name type="primary">cya-1</name>
    <name type="ORF">ZK507.6</name>
</gene>
<evidence type="ECO:0000256" key="1">
    <source>
        <dbReference type="SAM" id="MobiDB-lite"/>
    </source>
</evidence>
<evidence type="ECO:0000269" key="2">
    <source>
    </source>
</evidence>
<evidence type="ECO:0000305" key="3"/>
<sequence length="485" mass="55510">MRSALSLKPSNGNAAKSQAVNNKNVIKNAPLGGKLTRQIGTSNLLQQALPSKKIDESPIIKIDAKDSFKVFEDQEPEKENSSENVDATEKDSNVIPAEDNNMIHELERKMEEKSRAEKLKFKFMQTRDNSDITSRFSEPPSEFSVLCDDDDCDKVSVASSTFTTSVRATFSSFHFDENQRKKEFGKEEAVKKIQKKAAKEARDDSMFSSEEFFPDIIKYMLHRQTKNRASHECFDIQSQVNEEMRTILIDWFSDVVKEYNFQKETFHLAVSLVDRALSMFNIDKMRFQLVGTTSMMIAVKYEEIFPPEIEDFALITDNTYRVPDILLMERFLLGKFDFVVAMPTSSWFGTCFAKRMNFTKKMRNTVHYLLELSLIDVHFLRYRPSDIAAAACCFANLQADVESWPQKMVDDTGISTEDFVDVLRDLHRMYLNASTADFKSIFYNYSETAQMEVALLPAPTDKLRSMFPSIFVTAPKSSNDSSSPQ</sequence>
<keyword id="KW-0131">Cell cycle</keyword>
<keyword id="KW-0132">Cell division</keyword>
<keyword id="KW-0195">Cyclin</keyword>
<keyword id="KW-0498">Mitosis</keyword>
<keyword id="KW-1185">Reference proteome</keyword>
<protein>
    <recommendedName>
        <fullName>G2/mitotic-specific cyclin-A1</fullName>
    </recommendedName>
</protein>
<name>CCNA1_CAEEL</name>
<proteinExistence type="evidence at protein level"/>
<reference key="1">
    <citation type="journal article" date="1995" name="J. Cell Sci.">
        <title>Caenorhabditis elegans cyclin A- and B-type genes: a cyclin A multigene family, an ancestral cyclin B3 and differential germline expression.</title>
        <authorList>
            <person name="Kreutzer M.A."/>
            <person name="Richards J.P."/>
            <person name="de Silva-Udawatta M.N."/>
            <person name="Temenak J.J."/>
            <person name="Knoblich J.A."/>
            <person name="Lehner C.F."/>
            <person name="Bennett K.L."/>
        </authorList>
    </citation>
    <scope>NUCLEOTIDE SEQUENCE [MRNA]</scope>
    <source>
        <strain>Bristol N2</strain>
    </source>
</reference>
<reference key="2">
    <citation type="journal article" date="1994" name="Nature">
        <title>2.2 Mb of contiguous nucleotide sequence from chromosome III of C. elegans.</title>
        <authorList>
            <person name="Wilson R."/>
            <person name="Ainscough R."/>
            <person name="Anderson K."/>
            <person name="Baynes C."/>
            <person name="Berks M."/>
            <person name="Bonfield J."/>
            <person name="Burton J."/>
            <person name="Connell M."/>
            <person name="Copsey T."/>
            <person name="Cooper J."/>
            <person name="Coulson A."/>
            <person name="Craxton M."/>
            <person name="Dear S."/>
            <person name="Du Z."/>
            <person name="Durbin R."/>
            <person name="Favello A."/>
            <person name="Fraser A."/>
            <person name="Fulton L."/>
            <person name="Gardner A."/>
            <person name="Green P."/>
            <person name="Hawkins T."/>
            <person name="Hillier L."/>
            <person name="Jier M."/>
            <person name="Johnston L."/>
            <person name="Jones M."/>
            <person name="Kershaw J."/>
            <person name="Kirsten J."/>
            <person name="Laisster N."/>
            <person name="Latreille P."/>
            <person name="Lightning J."/>
            <person name="Lloyd C."/>
            <person name="Mortimore B."/>
            <person name="O'Callaghan M."/>
            <person name="Parsons J."/>
            <person name="Percy C."/>
            <person name="Rifken L."/>
            <person name="Roopra A."/>
            <person name="Saunders D."/>
            <person name="Shownkeen R."/>
            <person name="Sims M."/>
            <person name="Smaldon N."/>
            <person name="Smith A."/>
            <person name="Smith M."/>
            <person name="Sonnhammer E."/>
            <person name="Staden R."/>
            <person name="Sulston J."/>
            <person name="Thierry-Mieg J."/>
            <person name="Thomas K."/>
            <person name="Vaudin M."/>
            <person name="Vaughan K."/>
            <person name="Waterston R."/>
            <person name="Watson A."/>
            <person name="Weinstock L."/>
            <person name="Wilkinson-Sproat J."/>
            <person name="Wohldman P."/>
        </authorList>
    </citation>
    <scope>NUCLEOTIDE SEQUENCE [LARGE SCALE GENOMIC DNA]</scope>
    <source>
        <strain>Bristol N2</strain>
    </source>
</reference>
<reference key="3">
    <citation type="journal article" date="1998" name="Science">
        <title>Genome sequence of the nematode C. elegans: a platform for investigating biology.</title>
        <authorList>
            <consortium name="The C. elegans sequencing consortium"/>
        </authorList>
    </citation>
    <scope>NUCLEOTIDE SEQUENCE [LARGE SCALE GENOMIC DNA]</scope>
    <source>
        <strain>Bristol N2</strain>
    </source>
</reference>
<reference key="4">
    <citation type="journal article" date="2013" name="PLoS Genet.">
        <title>Coordination of cell proliferation and cell fate determination by CES-1 snail.</title>
        <authorList>
            <person name="Yan B."/>
            <person name="Memar N."/>
            <person name="Gallinger J."/>
            <person name="Conradt B."/>
        </authorList>
    </citation>
    <scope>FUNCTION</scope>
    <scope>TISSUE SPECIFICITY</scope>
    <scope>DISRUPTION PHENOTYPE</scope>
</reference>
<accession>P34638</accession>
<dbReference type="EMBL" id="U20902">
    <property type="protein sequence ID" value="AAA84393.1"/>
    <property type="molecule type" value="mRNA"/>
</dbReference>
<dbReference type="EMBL" id="Z29116">
    <property type="protein sequence ID" value="CAA82372.1"/>
    <property type="molecule type" value="Genomic_DNA"/>
</dbReference>
<dbReference type="PIR" id="D88548">
    <property type="entry name" value="D88548"/>
</dbReference>
<dbReference type="PIR" id="S40740">
    <property type="entry name" value="S40740"/>
</dbReference>
<dbReference type="RefSeq" id="NP_499018.1">
    <property type="nucleotide sequence ID" value="NM_066617.10"/>
</dbReference>
<dbReference type="SMR" id="P34638"/>
<dbReference type="BioGRID" id="41486">
    <property type="interactions" value="6"/>
</dbReference>
<dbReference type="FunCoup" id="P34638">
    <property type="interactions" value="1058"/>
</dbReference>
<dbReference type="IntAct" id="P34638">
    <property type="interactions" value="1"/>
</dbReference>
<dbReference type="STRING" id="6239.ZK507.6.1"/>
<dbReference type="PaxDb" id="6239-ZK507.6"/>
<dbReference type="PeptideAtlas" id="P34638"/>
<dbReference type="EnsemblMetazoa" id="ZK507.6.1">
    <property type="protein sequence ID" value="ZK507.6.1"/>
    <property type="gene ID" value="WBGene00000863"/>
</dbReference>
<dbReference type="GeneID" id="176287"/>
<dbReference type="KEGG" id="cel:CELE_ZK507.6"/>
<dbReference type="UCSC" id="ZK507.6">
    <property type="organism name" value="c. elegans"/>
</dbReference>
<dbReference type="AGR" id="WB:WBGene00000863"/>
<dbReference type="CTD" id="176287"/>
<dbReference type="WormBase" id="ZK507.6">
    <property type="protein sequence ID" value="CE03820"/>
    <property type="gene ID" value="WBGene00000863"/>
    <property type="gene designation" value="cya-1"/>
</dbReference>
<dbReference type="eggNOG" id="KOG0654">
    <property type="taxonomic scope" value="Eukaryota"/>
</dbReference>
<dbReference type="GeneTree" id="ENSGT00940000165715"/>
<dbReference type="HOGENOM" id="CLU_020695_2_4_1"/>
<dbReference type="InParanoid" id="P34638"/>
<dbReference type="OMA" id="CCFANLQ"/>
<dbReference type="OrthoDB" id="5590282at2759"/>
<dbReference type="PhylomeDB" id="P34638"/>
<dbReference type="Reactome" id="R-CEL-1538133">
    <property type="pathway name" value="G0 and Early G1"/>
</dbReference>
<dbReference type="Reactome" id="R-CEL-187577">
    <property type="pathway name" value="SCF(Skp2)-mediated degradation of p27/p21"/>
</dbReference>
<dbReference type="Reactome" id="R-CEL-2559586">
    <property type="pathway name" value="DNA Damage/Telomere Stress Induced Senescence"/>
</dbReference>
<dbReference type="Reactome" id="R-CEL-5689880">
    <property type="pathway name" value="Ub-specific processing proteases"/>
</dbReference>
<dbReference type="Reactome" id="R-CEL-6804116">
    <property type="pathway name" value="TP53 Regulates Transcription of Genes Involved in G1 Cell Cycle Arrest"/>
</dbReference>
<dbReference type="Reactome" id="R-CEL-68949">
    <property type="pathway name" value="Orc1 removal from chromatin"/>
</dbReference>
<dbReference type="Reactome" id="R-CEL-69017">
    <property type="pathway name" value="CDK-mediated phosphorylation and removal of Cdc6"/>
</dbReference>
<dbReference type="Reactome" id="R-CEL-69273">
    <property type="pathway name" value="Cyclin A/B1/B2 associated events during G2/M transition"/>
</dbReference>
<dbReference type="Reactome" id="R-CEL-69563">
    <property type="pathway name" value="p53-Dependent G1 DNA Damage Response"/>
</dbReference>
<dbReference type="Reactome" id="R-CEL-69656">
    <property type="pathway name" value="Cyclin A:Cdk2-associated events at S phase entry"/>
</dbReference>
<dbReference type="PRO" id="PR:P34638"/>
<dbReference type="Proteomes" id="UP000001940">
    <property type="component" value="Chromosome III"/>
</dbReference>
<dbReference type="Bgee" id="WBGene00000863">
    <property type="expression patterns" value="Expressed in embryo and 4 other cell types or tissues"/>
</dbReference>
<dbReference type="GO" id="GO:0097124">
    <property type="term" value="C:cyclin A2-CDK2 complex"/>
    <property type="evidence" value="ECO:0000318"/>
    <property type="project" value="GO_Central"/>
</dbReference>
<dbReference type="GO" id="GO:0005737">
    <property type="term" value="C:cytoplasm"/>
    <property type="evidence" value="ECO:0000318"/>
    <property type="project" value="GO_Central"/>
</dbReference>
<dbReference type="GO" id="GO:0005815">
    <property type="term" value="C:microtubule organizing center"/>
    <property type="evidence" value="ECO:0000318"/>
    <property type="project" value="GO_Central"/>
</dbReference>
<dbReference type="GO" id="GO:0005634">
    <property type="term" value="C:nucleus"/>
    <property type="evidence" value="ECO:0000318"/>
    <property type="project" value="GO_Central"/>
</dbReference>
<dbReference type="GO" id="GO:0016538">
    <property type="term" value="F:cyclin-dependent protein serine/threonine kinase regulator activity"/>
    <property type="evidence" value="ECO:0000318"/>
    <property type="project" value="GO_Central"/>
</dbReference>
<dbReference type="GO" id="GO:0051301">
    <property type="term" value="P:cell division"/>
    <property type="evidence" value="ECO:0007669"/>
    <property type="project" value="UniProtKB-KW"/>
</dbReference>
<dbReference type="GO" id="GO:0000082">
    <property type="term" value="P:G1/S transition of mitotic cell cycle"/>
    <property type="evidence" value="ECO:0000318"/>
    <property type="project" value="GO_Central"/>
</dbReference>
<dbReference type="GO" id="GO:0051321">
    <property type="term" value="P:meiotic cell cycle"/>
    <property type="evidence" value="ECO:0000315"/>
    <property type="project" value="UniProtKB"/>
</dbReference>
<dbReference type="CDD" id="cd20505">
    <property type="entry name" value="CYCLIN_CCNA_rpt2"/>
    <property type="match status" value="1"/>
</dbReference>
<dbReference type="FunFam" id="1.10.472.10:FF:000001">
    <property type="entry name" value="G2/mitotic-specific cyclin"/>
    <property type="match status" value="1"/>
</dbReference>
<dbReference type="Gene3D" id="1.10.472.10">
    <property type="entry name" value="Cyclin-like"/>
    <property type="match status" value="2"/>
</dbReference>
<dbReference type="InterPro" id="IPR039361">
    <property type="entry name" value="Cyclin"/>
</dbReference>
<dbReference type="InterPro" id="IPR013763">
    <property type="entry name" value="Cyclin-like_dom"/>
</dbReference>
<dbReference type="InterPro" id="IPR036915">
    <property type="entry name" value="Cyclin-like_sf"/>
</dbReference>
<dbReference type="InterPro" id="IPR046965">
    <property type="entry name" value="Cyclin_A/B-like"/>
</dbReference>
<dbReference type="InterPro" id="IPR004367">
    <property type="entry name" value="Cyclin_C-dom"/>
</dbReference>
<dbReference type="InterPro" id="IPR006671">
    <property type="entry name" value="Cyclin_N"/>
</dbReference>
<dbReference type="PANTHER" id="PTHR10177">
    <property type="entry name" value="CYCLINS"/>
    <property type="match status" value="1"/>
</dbReference>
<dbReference type="Pfam" id="PF02984">
    <property type="entry name" value="Cyclin_C"/>
    <property type="match status" value="1"/>
</dbReference>
<dbReference type="Pfam" id="PF00134">
    <property type="entry name" value="Cyclin_N"/>
    <property type="match status" value="1"/>
</dbReference>
<dbReference type="PIRSF" id="PIRSF001771">
    <property type="entry name" value="Cyclin_A_B_D_E"/>
    <property type="match status" value="1"/>
</dbReference>
<dbReference type="SMART" id="SM00385">
    <property type="entry name" value="CYCLIN"/>
    <property type="match status" value="2"/>
</dbReference>
<dbReference type="SMART" id="SM01332">
    <property type="entry name" value="Cyclin_C"/>
    <property type="match status" value="1"/>
</dbReference>
<dbReference type="SUPFAM" id="SSF47954">
    <property type="entry name" value="Cyclin-like"/>
    <property type="match status" value="2"/>
</dbReference>
<comment type="function">
    <text evidence="2">Involved in the control of the cell cycle after S phase. May bind to and activate cdk-1 and/or cdk-2 to promote cell cycle progression. Necessary for embryogenesis.</text>
</comment>
<comment type="interaction">
    <interactant intactId="EBI-2421605">
        <id>P34638</id>
    </interactant>
    <interactant intactId="EBI-2006759">
        <id>P34647</id>
        <label>mcm-6</label>
    </interactant>
    <organismsDiffer>false</organismsDiffer>
    <experiments>4</experiments>
</comment>
<comment type="tissue specificity">
    <text evidence="2">Expressed in the cell lineages ABarp, C and E as well as the NSM neuroblasts.</text>
</comment>
<comment type="disruption phenotype">
    <text evidence="2">Homozygous mutants are not viable. Partial loss-of-function mutation bc416 causes cell division defects with a reduction in the number of dividing NSM neuroblasts and some embryonic lethality.</text>
</comment>
<comment type="similarity">
    <text evidence="3">Belongs to the cyclin family. Cyclin AB subfamily.</text>
</comment>
<feature type="chain" id="PRO_0000080343" description="G2/mitotic-specific cyclin-A1">
    <location>
        <begin position="1"/>
        <end position="485"/>
    </location>
</feature>
<feature type="region of interest" description="Disordered" evidence="1">
    <location>
        <begin position="1"/>
        <end position="24"/>
    </location>
</feature>
<feature type="compositionally biased region" description="Polar residues" evidence="1">
    <location>
        <begin position="8"/>
        <end position="24"/>
    </location>
</feature>